<reference key="1">
    <citation type="journal article" date="2004" name="Proc. Natl. Acad. Sci. U.S.A.">
        <title>Complete genomes of two clinical Staphylococcus aureus strains: evidence for the rapid evolution of virulence and drug resistance.</title>
        <authorList>
            <person name="Holden M.T.G."/>
            <person name="Feil E.J."/>
            <person name="Lindsay J.A."/>
            <person name="Peacock S.J."/>
            <person name="Day N.P.J."/>
            <person name="Enright M.C."/>
            <person name="Foster T.J."/>
            <person name="Moore C.E."/>
            <person name="Hurst L."/>
            <person name="Atkin R."/>
            <person name="Barron A."/>
            <person name="Bason N."/>
            <person name="Bentley S.D."/>
            <person name="Chillingworth C."/>
            <person name="Chillingworth T."/>
            <person name="Churcher C."/>
            <person name="Clark L."/>
            <person name="Corton C."/>
            <person name="Cronin A."/>
            <person name="Doggett J."/>
            <person name="Dowd L."/>
            <person name="Feltwell T."/>
            <person name="Hance Z."/>
            <person name="Harris B."/>
            <person name="Hauser H."/>
            <person name="Holroyd S."/>
            <person name="Jagels K."/>
            <person name="James K.D."/>
            <person name="Lennard N."/>
            <person name="Line A."/>
            <person name="Mayes R."/>
            <person name="Moule S."/>
            <person name="Mungall K."/>
            <person name="Ormond D."/>
            <person name="Quail M.A."/>
            <person name="Rabbinowitsch E."/>
            <person name="Rutherford K.M."/>
            <person name="Sanders M."/>
            <person name="Sharp S."/>
            <person name="Simmonds M."/>
            <person name="Stevens K."/>
            <person name="Whitehead S."/>
            <person name="Barrell B.G."/>
            <person name="Spratt B.G."/>
            <person name="Parkhill J."/>
        </authorList>
    </citation>
    <scope>NUCLEOTIDE SEQUENCE [LARGE SCALE GENOMIC DNA]</scope>
    <source>
        <strain>MRSA252</strain>
    </source>
</reference>
<dbReference type="EMBL" id="BX571856">
    <property type="protein sequence ID" value="CAG41197.1"/>
    <property type="molecule type" value="Genomic_DNA"/>
</dbReference>
<dbReference type="RefSeq" id="WP_000701483.1">
    <property type="nucleotide sequence ID" value="NC_002952.2"/>
</dbReference>
<dbReference type="SMR" id="Q6GEU7"/>
<dbReference type="GeneID" id="98346435"/>
<dbReference type="KEGG" id="sar:SAR2216"/>
<dbReference type="HOGENOM" id="CLU_116648_1_0_9"/>
<dbReference type="Proteomes" id="UP000000596">
    <property type="component" value="Chromosome"/>
</dbReference>
<dbReference type="GO" id="GO:0000428">
    <property type="term" value="C:DNA-directed RNA polymerase complex"/>
    <property type="evidence" value="ECO:0007669"/>
    <property type="project" value="UniProtKB-KW"/>
</dbReference>
<dbReference type="GO" id="GO:0003899">
    <property type="term" value="F:DNA-directed RNA polymerase activity"/>
    <property type="evidence" value="ECO:0007669"/>
    <property type="project" value="UniProtKB-UniRule"/>
</dbReference>
<dbReference type="GO" id="GO:0006351">
    <property type="term" value="P:DNA-templated transcription"/>
    <property type="evidence" value="ECO:0007669"/>
    <property type="project" value="InterPro"/>
</dbReference>
<dbReference type="GO" id="GO:0006355">
    <property type="term" value="P:regulation of DNA-templated transcription"/>
    <property type="evidence" value="ECO:0007669"/>
    <property type="project" value="UniProtKB-UniRule"/>
</dbReference>
<dbReference type="Gene3D" id="1.10.10.1250">
    <property type="entry name" value="RNA polymerase, subunit delta, N-terminal domain"/>
    <property type="match status" value="1"/>
</dbReference>
<dbReference type="HAMAP" id="MF_00357">
    <property type="entry name" value="RNApol_bact_RpoE"/>
    <property type="match status" value="1"/>
</dbReference>
<dbReference type="InterPro" id="IPR007759">
    <property type="entry name" value="Asxl_HARE-HTH"/>
</dbReference>
<dbReference type="InterPro" id="IPR038087">
    <property type="entry name" value="RNAP_delta_N_dom_sf"/>
</dbReference>
<dbReference type="InterPro" id="IPR029757">
    <property type="entry name" value="RpoE"/>
</dbReference>
<dbReference type="NCBIfam" id="TIGR04567">
    <property type="entry name" value="RNAP_delt_lowGC"/>
    <property type="match status" value="1"/>
</dbReference>
<dbReference type="Pfam" id="PF05066">
    <property type="entry name" value="HARE-HTH"/>
    <property type="match status" value="1"/>
</dbReference>
<dbReference type="PROSITE" id="PS51913">
    <property type="entry name" value="HTH_HARE"/>
    <property type="match status" value="1"/>
</dbReference>
<keyword id="KW-0240">DNA-directed RNA polymerase</keyword>
<keyword id="KW-0548">Nucleotidyltransferase</keyword>
<keyword id="KW-0804">Transcription</keyword>
<keyword id="KW-0808">Transferase</keyword>
<accession>Q6GEU7</accession>
<comment type="function">
    <text evidence="1">Participates in both the initiation and recycling phases of transcription. In the presence of the delta subunit, RNAP displays an increased specificity of transcription, a decreased affinity for nucleic acids, and an increased efficiency of RNA synthesis because of enhanced recycling.</text>
</comment>
<comment type="subunit">
    <text evidence="1">RNAP is composed of a core of 2 alpha, a beta and a beta' subunits. The core is associated with a delta subunit and one of several sigma factors.</text>
</comment>
<comment type="similarity">
    <text evidence="1">Belongs to the RpoE family.</text>
</comment>
<organism>
    <name type="scientific">Staphylococcus aureus (strain MRSA252)</name>
    <dbReference type="NCBI Taxonomy" id="282458"/>
    <lineage>
        <taxon>Bacteria</taxon>
        <taxon>Bacillati</taxon>
        <taxon>Bacillota</taxon>
        <taxon>Bacilli</taxon>
        <taxon>Bacillales</taxon>
        <taxon>Staphylococcaceae</taxon>
        <taxon>Staphylococcus</taxon>
    </lineage>
</organism>
<feature type="chain" id="PRO_0000204323" description="Probable DNA-directed RNA polymerase subunit delta">
    <location>
        <begin position="1"/>
        <end position="176"/>
    </location>
</feature>
<feature type="domain" description="HTH HARE-type" evidence="2">
    <location>
        <begin position="14"/>
        <end position="81"/>
    </location>
</feature>
<feature type="region of interest" description="Disordered" evidence="3">
    <location>
        <begin position="114"/>
        <end position="176"/>
    </location>
</feature>
<feature type="compositionally biased region" description="Acidic residues" evidence="3">
    <location>
        <begin position="116"/>
        <end position="145"/>
    </location>
</feature>
<feature type="compositionally biased region" description="Acidic residues" evidence="3">
    <location>
        <begin position="153"/>
        <end position="176"/>
    </location>
</feature>
<sequence>MKIQDYTKQMVDEKSFIDMAYTLLNDKGETMNLYDIIDEFRALGDYEYEEIENRVVQFYTDLNTDGRFLNVGENLWGLRDWYSVDDIEEKIAPTIQKFDILDADDEEDQNLKLLGEDEMDDDDDIPAQTDDQEELNDPEDEQVEEEINHSDIVIEEDEDELDEDEEVFEDEEDFND</sequence>
<name>RPOE_STAAR</name>
<evidence type="ECO:0000255" key="1">
    <source>
        <dbReference type="HAMAP-Rule" id="MF_00357"/>
    </source>
</evidence>
<evidence type="ECO:0000255" key="2">
    <source>
        <dbReference type="PROSITE-ProRule" id="PRU01261"/>
    </source>
</evidence>
<evidence type="ECO:0000256" key="3">
    <source>
        <dbReference type="SAM" id="MobiDB-lite"/>
    </source>
</evidence>
<protein>
    <recommendedName>
        <fullName evidence="1">Probable DNA-directed RNA polymerase subunit delta</fullName>
    </recommendedName>
    <alternativeName>
        <fullName evidence="1">RNAP delta factor</fullName>
    </alternativeName>
</protein>
<proteinExistence type="inferred from homology"/>
<gene>
    <name evidence="1" type="primary">rpoE</name>
    <name type="ordered locus">SAR2216</name>
</gene>